<keyword id="KW-1003">Cell membrane</keyword>
<keyword id="KW-0472">Membrane</keyword>
<keyword id="KW-1185">Reference proteome</keyword>
<keyword id="KW-0812">Transmembrane</keyword>
<keyword id="KW-1133">Transmembrane helix</keyword>
<keyword id="KW-0813">Transport</keyword>
<proteinExistence type="evidence at transcript level"/>
<protein>
    <recommendedName>
        <fullName>Uric acid permease PucK</fullName>
    </recommendedName>
</protein>
<accession>O32140</accession>
<organism>
    <name type="scientific">Bacillus subtilis (strain 168)</name>
    <dbReference type="NCBI Taxonomy" id="224308"/>
    <lineage>
        <taxon>Bacteria</taxon>
        <taxon>Bacillati</taxon>
        <taxon>Bacillota</taxon>
        <taxon>Bacilli</taxon>
        <taxon>Bacillales</taxon>
        <taxon>Bacillaceae</taxon>
        <taxon>Bacillus</taxon>
    </lineage>
</organism>
<gene>
    <name type="primary">pucK</name>
    <name type="synonym">yunK</name>
    <name type="ordered locus">BSU32440</name>
</gene>
<feature type="chain" id="PRO_0000165955" description="Uric acid permease PucK">
    <location>
        <begin position="1"/>
        <end position="430"/>
    </location>
</feature>
<feature type="transmembrane region" description="Helical" evidence="1">
    <location>
        <begin position="18"/>
        <end position="38"/>
    </location>
</feature>
<feature type="transmembrane region" description="Helical" evidence="1">
    <location>
        <begin position="43"/>
        <end position="63"/>
    </location>
</feature>
<feature type="transmembrane region" description="Helical" evidence="1">
    <location>
        <begin position="67"/>
        <end position="87"/>
    </location>
</feature>
<feature type="transmembrane region" description="Helical" evidence="1">
    <location>
        <begin position="97"/>
        <end position="117"/>
    </location>
</feature>
<feature type="transmembrane region" description="Helical" evidence="1">
    <location>
        <begin position="122"/>
        <end position="142"/>
    </location>
</feature>
<feature type="transmembrane region" description="Helical" evidence="1">
    <location>
        <begin position="163"/>
        <end position="183"/>
    </location>
</feature>
<feature type="transmembrane region" description="Helical" evidence="1">
    <location>
        <begin position="185"/>
        <end position="205"/>
    </location>
</feature>
<feature type="transmembrane region" description="Helical" evidence="1">
    <location>
        <begin position="209"/>
        <end position="229"/>
    </location>
</feature>
<feature type="transmembrane region" description="Helical" evidence="1">
    <location>
        <begin position="233"/>
        <end position="253"/>
    </location>
</feature>
<feature type="transmembrane region" description="Helical" evidence="1">
    <location>
        <begin position="274"/>
        <end position="294"/>
    </location>
</feature>
<feature type="transmembrane region" description="Helical" evidence="1">
    <location>
        <begin position="310"/>
        <end position="330"/>
    </location>
</feature>
<feature type="transmembrane region" description="Helical" evidence="1">
    <location>
        <begin position="333"/>
        <end position="353"/>
    </location>
</feature>
<feature type="transmembrane region" description="Helical" evidence="1">
    <location>
        <begin position="369"/>
        <end position="389"/>
    </location>
</feature>
<feature type="transmembrane region" description="Helical" evidence="1">
    <location>
        <begin position="398"/>
        <end position="418"/>
    </location>
</feature>
<reference key="1">
    <citation type="journal article" date="1997" name="Nature">
        <title>The complete genome sequence of the Gram-positive bacterium Bacillus subtilis.</title>
        <authorList>
            <person name="Kunst F."/>
            <person name="Ogasawara N."/>
            <person name="Moszer I."/>
            <person name="Albertini A.M."/>
            <person name="Alloni G."/>
            <person name="Azevedo V."/>
            <person name="Bertero M.G."/>
            <person name="Bessieres P."/>
            <person name="Bolotin A."/>
            <person name="Borchert S."/>
            <person name="Borriss R."/>
            <person name="Boursier L."/>
            <person name="Brans A."/>
            <person name="Braun M."/>
            <person name="Brignell S.C."/>
            <person name="Bron S."/>
            <person name="Brouillet S."/>
            <person name="Bruschi C.V."/>
            <person name="Caldwell B."/>
            <person name="Capuano V."/>
            <person name="Carter N.M."/>
            <person name="Choi S.-K."/>
            <person name="Codani J.-J."/>
            <person name="Connerton I.F."/>
            <person name="Cummings N.J."/>
            <person name="Daniel R.A."/>
            <person name="Denizot F."/>
            <person name="Devine K.M."/>
            <person name="Duesterhoeft A."/>
            <person name="Ehrlich S.D."/>
            <person name="Emmerson P.T."/>
            <person name="Entian K.-D."/>
            <person name="Errington J."/>
            <person name="Fabret C."/>
            <person name="Ferrari E."/>
            <person name="Foulger D."/>
            <person name="Fritz C."/>
            <person name="Fujita M."/>
            <person name="Fujita Y."/>
            <person name="Fuma S."/>
            <person name="Galizzi A."/>
            <person name="Galleron N."/>
            <person name="Ghim S.-Y."/>
            <person name="Glaser P."/>
            <person name="Goffeau A."/>
            <person name="Golightly E.J."/>
            <person name="Grandi G."/>
            <person name="Guiseppi G."/>
            <person name="Guy B.J."/>
            <person name="Haga K."/>
            <person name="Haiech J."/>
            <person name="Harwood C.R."/>
            <person name="Henaut A."/>
            <person name="Hilbert H."/>
            <person name="Holsappel S."/>
            <person name="Hosono S."/>
            <person name="Hullo M.-F."/>
            <person name="Itaya M."/>
            <person name="Jones L.-M."/>
            <person name="Joris B."/>
            <person name="Karamata D."/>
            <person name="Kasahara Y."/>
            <person name="Klaerr-Blanchard M."/>
            <person name="Klein C."/>
            <person name="Kobayashi Y."/>
            <person name="Koetter P."/>
            <person name="Koningstein G."/>
            <person name="Krogh S."/>
            <person name="Kumano M."/>
            <person name="Kurita K."/>
            <person name="Lapidus A."/>
            <person name="Lardinois S."/>
            <person name="Lauber J."/>
            <person name="Lazarevic V."/>
            <person name="Lee S.-M."/>
            <person name="Levine A."/>
            <person name="Liu H."/>
            <person name="Masuda S."/>
            <person name="Mauel C."/>
            <person name="Medigue C."/>
            <person name="Medina N."/>
            <person name="Mellado R.P."/>
            <person name="Mizuno M."/>
            <person name="Moestl D."/>
            <person name="Nakai S."/>
            <person name="Noback M."/>
            <person name="Noone D."/>
            <person name="O'Reilly M."/>
            <person name="Ogawa K."/>
            <person name="Ogiwara A."/>
            <person name="Oudega B."/>
            <person name="Park S.-H."/>
            <person name="Parro V."/>
            <person name="Pohl T.M."/>
            <person name="Portetelle D."/>
            <person name="Porwollik S."/>
            <person name="Prescott A.M."/>
            <person name="Presecan E."/>
            <person name="Pujic P."/>
            <person name="Purnelle B."/>
            <person name="Rapoport G."/>
            <person name="Rey M."/>
            <person name="Reynolds S."/>
            <person name="Rieger M."/>
            <person name="Rivolta C."/>
            <person name="Rocha E."/>
            <person name="Roche B."/>
            <person name="Rose M."/>
            <person name="Sadaie Y."/>
            <person name="Sato T."/>
            <person name="Scanlan E."/>
            <person name="Schleich S."/>
            <person name="Schroeter R."/>
            <person name="Scoffone F."/>
            <person name="Sekiguchi J."/>
            <person name="Sekowska A."/>
            <person name="Seror S.J."/>
            <person name="Serror P."/>
            <person name="Shin B.-S."/>
            <person name="Soldo B."/>
            <person name="Sorokin A."/>
            <person name="Tacconi E."/>
            <person name="Takagi T."/>
            <person name="Takahashi H."/>
            <person name="Takemaru K."/>
            <person name="Takeuchi M."/>
            <person name="Tamakoshi A."/>
            <person name="Tanaka T."/>
            <person name="Terpstra P."/>
            <person name="Tognoni A."/>
            <person name="Tosato V."/>
            <person name="Uchiyama S."/>
            <person name="Vandenbol M."/>
            <person name="Vannier F."/>
            <person name="Vassarotti A."/>
            <person name="Viari A."/>
            <person name="Wambutt R."/>
            <person name="Wedler E."/>
            <person name="Wedler H."/>
            <person name="Weitzenegger T."/>
            <person name="Winters P."/>
            <person name="Wipat A."/>
            <person name="Yamamoto H."/>
            <person name="Yamane K."/>
            <person name="Yasumoto K."/>
            <person name="Yata K."/>
            <person name="Yoshida K."/>
            <person name="Yoshikawa H.-F."/>
            <person name="Zumstein E."/>
            <person name="Yoshikawa H."/>
            <person name="Danchin A."/>
        </authorList>
    </citation>
    <scope>NUCLEOTIDE SEQUENCE [LARGE SCALE GENOMIC DNA]</scope>
    <source>
        <strain>168</strain>
    </source>
</reference>
<reference key="2">
    <citation type="journal article" date="2001" name="J. Bacteriol.">
        <title>Functional analysis of 14 genes that constitute the purine catabolic pathway in Bacillus subtilis and evidence for a novel regulon controlled by the PucR transcription activator.</title>
        <authorList>
            <person name="Schultz A.C."/>
            <person name="Nygaard P."/>
            <person name="Saxild H.H."/>
        </authorList>
    </citation>
    <scope>FUNCTION</scope>
    <scope>INDUCTION</scope>
    <source>
        <strain>168</strain>
    </source>
</reference>
<reference key="3">
    <citation type="journal article" date="2003" name="Mol. Microbiol.">
        <title>Identification of additional TnrA-regulated genes of Bacillus subtilis associated with a TnrA box.</title>
        <authorList>
            <person name="Yoshida K."/>
            <person name="Yamaguchi H."/>
            <person name="Kinehara M."/>
            <person name="Ohki Y.-H."/>
            <person name="Nakaura Y."/>
            <person name="Fujita Y."/>
        </authorList>
    </citation>
    <scope>INDUCTION BY TNRA</scope>
</reference>
<comment type="function">
    <text evidence="2">Uptake of uric acid.</text>
</comment>
<comment type="subcellular location">
    <subcellularLocation>
        <location evidence="4">Cell membrane</location>
        <topology evidence="4">Multi-pass membrane protein</topology>
    </subcellularLocation>
</comment>
<comment type="induction">
    <text evidence="2 3">Expression is very low in excess nitrogen (glutamate plus ammonia) and is induced by TnrA during limiting-nitrogen conditions (glutamate). Expression is further induced when allantoin or uric acid are added during limiting-nitrogen conditions.</text>
</comment>
<comment type="similarity">
    <text evidence="4">Belongs to the nucleobase:cation symporter-2 (NCS2) (TC 2.A.40) family.</text>
</comment>
<name>PUCK_BACSU</name>
<sequence>MKEQHNALQLMMLGLQHMLAMYAGAILVPLIVGAAIGLNAGQLTYLIAIDLFMCGAATLLQLWRNRYFGIGLPVVLGCTFTAVGPMISIGSTYGVPAIYGAIIAAGLIVVLAAGFFGKLVRFFPPVVTGSVVMIIGISLIPTAMNNLAGGEGSKEFGSLDNVLLGFGVTAFILLLFYFFKGFIRSIAILLGLIAGTAAAYFMGKVDFSEVLEASWLHVPSLFYFGPPTFELPAVVTMLLVAIVSLVESTGVYFALADITNRRLSEKDLEKGYRAEGLAILLGGLFNAFPYTAFSQNVGIVQLSKMKSVNVIAITGIILVAIGLVPKAAALTTVIPTPVLGGAMIVMFGMVISYGIKMLSSVDLDSQGNLLIIASSVSLGLGATTVPALFSSLSGAASVLAGSGIVIGSLTAIALHAFFQTKQPNSADIKT</sequence>
<dbReference type="EMBL" id="AL009126">
    <property type="protein sequence ID" value="CAB15234.1"/>
    <property type="molecule type" value="Genomic_DNA"/>
</dbReference>
<dbReference type="PIR" id="F70016">
    <property type="entry name" value="F70016"/>
</dbReference>
<dbReference type="RefSeq" id="NP_391124.1">
    <property type="nucleotide sequence ID" value="NC_000964.3"/>
</dbReference>
<dbReference type="RefSeq" id="WP_003244570.1">
    <property type="nucleotide sequence ID" value="NZ_OZ025638.1"/>
</dbReference>
<dbReference type="SMR" id="O32140"/>
<dbReference type="FunCoup" id="O32140">
    <property type="interactions" value="172"/>
</dbReference>
<dbReference type="STRING" id="224308.BSU32440"/>
<dbReference type="TCDB" id="2.A.40.3.4">
    <property type="family name" value="the nucleobase/ascorbate transporter (nat) or nucleobase:cation symporter-2 (ncs2) family"/>
</dbReference>
<dbReference type="PaxDb" id="224308-BSU32440"/>
<dbReference type="EnsemblBacteria" id="CAB15234">
    <property type="protein sequence ID" value="CAB15234"/>
    <property type="gene ID" value="BSU_32440"/>
</dbReference>
<dbReference type="GeneID" id="937191"/>
<dbReference type="KEGG" id="bsu:BSU32440"/>
<dbReference type="PATRIC" id="fig|224308.179.peg.3511"/>
<dbReference type="eggNOG" id="COG2233">
    <property type="taxonomic scope" value="Bacteria"/>
</dbReference>
<dbReference type="InParanoid" id="O32140"/>
<dbReference type="OrthoDB" id="9805749at2"/>
<dbReference type="PhylomeDB" id="O32140"/>
<dbReference type="BioCyc" id="BSUB:BSU32440-MONOMER"/>
<dbReference type="Proteomes" id="UP000001570">
    <property type="component" value="Chromosome"/>
</dbReference>
<dbReference type="GO" id="GO:0005886">
    <property type="term" value="C:plasma membrane"/>
    <property type="evidence" value="ECO:0000318"/>
    <property type="project" value="GO_Central"/>
</dbReference>
<dbReference type="GO" id="GO:0042907">
    <property type="term" value="F:xanthine transmembrane transporter activity"/>
    <property type="evidence" value="ECO:0000318"/>
    <property type="project" value="GO_Central"/>
</dbReference>
<dbReference type="GO" id="GO:0042906">
    <property type="term" value="P:xanthine transport"/>
    <property type="evidence" value="ECO:0000318"/>
    <property type="project" value="GO_Central"/>
</dbReference>
<dbReference type="InterPro" id="IPR006043">
    <property type="entry name" value="NCS2"/>
</dbReference>
<dbReference type="InterPro" id="IPR017588">
    <property type="entry name" value="UacT-like"/>
</dbReference>
<dbReference type="InterPro" id="IPR006042">
    <property type="entry name" value="Xan_ur_permease"/>
</dbReference>
<dbReference type="NCBIfam" id="TIGR00801">
    <property type="entry name" value="ncs2"/>
    <property type="match status" value="1"/>
</dbReference>
<dbReference type="NCBIfam" id="NF037981">
    <property type="entry name" value="NCS2_1"/>
    <property type="match status" value="1"/>
</dbReference>
<dbReference type="NCBIfam" id="TIGR03173">
    <property type="entry name" value="pbuX"/>
    <property type="match status" value="1"/>
</dbReference>
<dbReference type="PANTHER" id="PTHR42810">
    <property type="entry name" value="PURINE PERMEASE C1399.01C-RELATED"/>
    <property type="match status" value="1"/>
</dbReference>
<dbReference type="PANTHER" id="PTHR42810:SF4">
    <property type="entry name" value="URIC ACID TRANSPORTER UACT"/>
    <property type="match status" value="1"/>
</dbReference>
<dbReference type="Pfam" id="PF00860">
    <property type="entry name" value="Xan_ur_permease"/>
    <property type="match status" value="1"/>
</dbReference>
<dbReference type="PROSITE" id="PS01116">
    <property type="entry name" value="XANTH_URACIL_PERMASE"/>
    <property type="match status" value="1"/>
</dbReference>
<evidence type="ECO:0000255" key="1"/>
<evidence type="ECO:0000269" key="2">
    <source>
    </source>
</evidence>
<evidence type="ECO:0000269" key="3">
    <source>
    </source>
</evidence>
<evidence type="ECO:0000305" key="4"/>